<accession>P33725</accession>
<accession>A5YV78</accession>
<accession>Q0Q0E3</accession>
<accession>Q56UX8</accession>
<sequence>MGDWSFLGEFLEEVHKHSTVIGKVWLTVLFIFRMLVLGTAAESSWGDEQADFQCDTMQPGCGNVCYDQAFPISHIRYWVLQIIFVSTPSLVYMGHAMHTVRMQEKRKLREAERAKEARGAGSYEYPVAEKAELSCWEEVNGRIVLQGTLLNTYVCSILIRTTMEVAFIVGQYLLYGIFLDTLHVCRRSPCPHPVNCYVSRPTEKNVFIVFMLAVAALSLFLSLAELYHLGWKKLRQRFVKSGQGMAECQLPGPSAGIVQNCTPPPDFNQCLENGPGGKFFNPFSNKMASQQNTDNLATEQVQGQEPIPGEGFIHIRYAQKPEVPNGASPGHRLPHGYQSDKRRLSKASSKARSDDLSV</sequence>
<name>CXA5_CANLF</name>
<organism>
    <name type="scientific">Canis lupus familiaris</name>
    <name type="common">Dog</name>
    <name type="synonym">Canis familiaris</name>
    <dbReference type="NCBI Taxonomy" id="9615"/>
    <lineage>
        <taxon>Eukaryota</taxon>
        <taxon>Metazoa</taxon>
        <taxon>Chordata</taxon>
        <taxon>Craniata</taxon>
        <taxon>Vertebrata</taxon>
        <taxon>Euteleostomi</taxon>
        <taxon>Mammalia</taxon>
        <taxon>Eutheria</taxon>
        <taxon>Laurasiatheria</taxon>
        <taxon>Carnivora</taxon>
        <taxon>Caniformia</taxon>
        <taxon>Canidae</taxon>
        <taxon>Canis</taxon>
    </lineage>
</organism>
<reference key="1">
    <citation type="journal article" date="1992" name="Circ. Res.">
        <title>Cardiac myocytes express multiple gap junction proteins.</title>
        <authorList>
            <person name="Kanter H.L."/>
            <person name="Saffitz J.E."/>
            <person name="Beyer E.C."/>
        </authorList>
    </citation>
    <scope>NUCLEOTIDE SEQUENCE [GENOMIC DNA]</scope>
</reference>
<reference key="2">
    <citation type="submission" date="2004-03" db="EMBL/GenBank/DDBJ databases">
        <title>Isolation and comparison of canine connexin 40, 43 and 45.</title>
        <authorList>
            <person name="Hyun C."/>
            <person name="Kang M."/>
            <person name="Filippich L.J."/>
        </authorList>
    </citation>
    <scope>NUCLEOTIDE SEQUENCE [MRNA]</scope>
</reference>
<reference key="3">
    <citation type="submission" date="2006-06" db="EMBL/GenBank/DDBJ databases">
        <title>Canine Cx40 gene screening.</title>
        <authorList>
            <person name="Hyun C."/>
            <person name="Lee S.-A."/>
            <person name="Lee S.-G."/>
        </authorList>
    </citation>
    <scope>NUCLEOTIDE SEQUENCE [MRNA]</scope>
</reference>
<reference key="4">
    <citation type="submission" date="2007-05" db="EMBL/GenBank/DDBJ databases">
        <title>Isolation and characterization of canine connexin 40 gene.</title>
        <authorList>
            <person name="Hyun C."/>
            <person name="Lee S.-A."/>
        </authorList>
    </citation>
    <scope>NUCLEOTIDE SEQUENCE [MRNA]</scope>
</reference>
<dbReference type="EMBL" id="M81347">
    <property type="protein sequence ID" value="AAA30838.1"/>
    <property type="molecule type" value="Genomic_DNA"/>
</dbReference>
<dbReference type="EMBL" id="AY567709">
    <property type="protein sequence ID" value="AAT10275.1"/>
    <property type="molecule type" value="mRNA"/>
</dbReference>
<dbReference type="EMBL" id="DQ666281">
    <property type="protein sequence ID" value="ABG75571.1"/>
    <property type="molecule type" value="mRNA"/>
</dbReference>
<dbReference type="EMBL" id="EF589114">
    <property type="protein sequence ID" value="ABQ97017.1"/>
    <property type="molecule type" value="mRNA"/>
</dbReference>
<dbReference type="PIR" id="A49024">
    <property type="entry name" value="A49024"/>
</dbReference>
<dbReference type="RefSeq" id="NP_001017442.2">
    <property type="nucleotide sequence ID" value="NM_001017442.3"/>
</dbReference>
<dbReference type="SMR" id="P33725"/>
<dbReference type="FunCoup" id="P33725">
    <property type="interactions" value="32"/>
</dbReference>
<dbReference type="STRING" id="9615.ENSCAFP00000016302"/>
<dbReference type="PaxDb" id="9612-ENSCAFP00000016302"/>
<dbReference type="Ensembl" id="ENSCAFT00000017606.4">
    <property type="protein sequence ID" value="ENSCAFP00000016302.3"/>
    <property type="gene ID" value="ENSCAFG00000011069.4"/>
</dbReference>
<dbReference type="Ensembl" id="ENSCAFT00030021096.1">
    <property type="protein sequence ID" value="ENSCAFP00030018393.1"/>
    <property type="gene ID" value="ENSCAFG00030011400.1"/>
</dbReference>
<dbReference type="Ensembl" id="ENSCAFT00040032388.1">
    <property type="protein sequence ID" value="ENSCAFP00040028174.1"/>
    <property type="gene ID" value="ENSCAFG00040017521.1"/>
</dbReference>
<dbReference type="Ensembl" id="ENSCAFT00845017555.1">
    <property type="protein sequence ID" value="ENSCAFP00845013664.1"/>
    <property type="gene ID" value="ENSCAFG00845009988.1"/>
</dbReference>
<dbReference type="GeneID" id="483155"/>
<dbReference type="KEGG" id="cfa:483155"/>
<dbReference type="CTD" id="2702"/>
<dbReference type="VEuPathDB" id="HostDB:ENSCAFG00845009988"/>
<dbReference type="VGNC" id="VGNC:41235">
    <property type="gene designation" value="GJA5"/>
</dbReference>
<dbReference type="eggNOG" id="ENOG502QW11">
    <property type="taxonomic scope" value="Eukaryota"/>
</dbReference>
<dbReference type="GeneTree" id="ENSGT01050000244864"/>
<dbReference type="HOGENOM" id="CLU_037388_0_0_1"/>
<dbReference type="InParanoid" id="P33725"/>
<dbReference type="OMA" id="FIHIHYG"/>
<dbReference type="OrthoDB" id="9946832at2759"/>
<dbReference type="TreeFam" id="TF329606"/>
<dbReference type="Reactome" id="R-CFA-190861">
    <property type="pathway name" value="Gap junction assembly"/>
</dbReference>
<dbReference type="Proteomes" id="UP000002254">
    <property type="component" value="Chromosome 17"/>
</dbReference>
<dbReference type="Proteomes" id="UP000694429">
    <property type="component" value="Chromosome 17"/>
</dbReference>
<dbReference type="Proteomes" id="UP000694542">
    <property type="component" value="Chromosome 17"/>
</dbReference>
<dbReference type="Proteomes" id="UP000805418">
    <property type="component" value="Chromosome 17"/>
</dbReference>
<dbReference type="Bgee" id="ENSCAFG00000011069">
    <property type="expression patterns" value="Expressed in right cardiac atrium and 45 other cell types or tissues"/>
</dbReference>
<dbReference type="GO" id="GO:0005922">
    <property type="term" value="C:connexin complex"/>
    <property type="evidence" value="ECO:0000314"/>
    <property type="project" value="BHF-UCL"/>
</dbReference>
<dbReference type="GO" id="GO:0014704">
    <property type="term" value="C:intercalated disc"/>
    <property type="evidence" value="ECO:0007669"/>
    <property type="project" value="Ensembl"/>
</dbReference>
<dbReference type="GO" id="GO:0086076">
    <property type="term" value="F:gap junction channel activity involved in atrial cardiac muscle cell-AV node cell electrical coupling"/>
    <property type="evidence" value="ECO:0000318"/>
    <property type="project" value="GO_Central"/>
</dbReference>
<dbReference type="GO" id="GO:0086077">
    <property type="term" value="F:gap junction channel activity involved in AV node cell-bundle of His cell electrical coupling"/>
    <property type="evidence" value="ECO:0007669"/>
    <property type="project" value="Ensembl"/>
</dbReference>
<dbReference type="GO" id="GO:0086078">
    <property type="term" value="F:gap junction channel activity involved in bundle of His cell-Purkinje myocyte electrical coupling"/>
    <property type="evidence" value="ECO:0007669"/>
    <property type="project" value="Ensembl"/>
</dbReference>
<dbReference type="GO" id="GO:0055077">
    <property type="term" value="F:gap junction hemi-channel activity"/>
    <property type="evidence" value="ECO:0007669"/>
    <property type="project" value="Ensembl"/>
</dbReference>
<dbReference type="GO" id="GO:0001525">
    <property type="term" value="P:angiogenesis"/>
    <property type="evidence" value="ECO:0007669"/>
    <property type="project" value="Ensembl"/>
</dbReference>
<dbReference type="GO" id="GO:0048844">
    <property type="term" value="P:artery morphogenesis"/>
    <property type="evidence" value="ECO:0007669"/>
    <property type="project" value="Ensembl"/>
</dbReference>
<dbReference type="GO" id="GO:0086044">
    <property type="term" value="P:atrial cardiac muscle cell to AV node cell communication by electrical coupling"/>
    <property type="evidence" value="ECO:0000318"/>
    <property type="project" value="GO_Central"/>
</dbReference>
<dbReference type="GO" id="GO:0060413">
    <property type="term" value="P:atrial septum morphogenesis"/>
    <property type="evidence" value="ECO:0007669"/>
    <property type="project" value="Ensembl"/>
</dbReference>
<dbReference type="GO" id="GO:0003294">
    <property type="term" value="P:atrial ventricular junction remodeling"/>
    <property type="evidence" value="ECO:0007669"/>
    <property type="project" value="Ensembl"/>
</dbReference>
<dbReference type="GO" id="GO:0097746">
    <property type="term" value="P:blood vessel diameter maintenance"/>
    <property type="evidence" value="ECO:0007669"/>
    <property type="project" value="Ensembl"/>
</dbReference>
<dbReference type="GO" id="GO:0003161">
    <property type="term" value="P:cardiac conduction system development"/>
    <property type="evidence" value="ECO:0007669"/>
    <property type="project" value="Ensembl"/>
</dbReference>
<dbReference type="GO" id="GO:0007267">
    <property type="term" value="P:cell-cell signaling"/>
    <property type="evidence" value="ECO:0000318"/>
    <property type="project" value="GO_Central"/>
</dbReference>
<dbReference type="GO" id="GO:0035050">
    <property type="term" value="P:embryonic heart tube development"/>
    <property type="evidence" value="ECO:0007669"/>
    <property type="project" value="Ensembl"/>
</dbReference>
<dbReference type="GO" id="GO:0030326">
    <property type="term" value="P:embryonic limb morphogenesis"/>
    <property type="evidence" value="ECO:0007669"/>
    <property type="project" value="Ensembl"/>
</dbReference>
<dbReference type="GO" id="GO:0035922">
    <property type="term" value="P:foramen ovale closure"/>
    <property type="evidence" value="ECO:0007669"/>
    <property type="project" value="Ensembl"/>
</dbReference>
<dbReference type="GO" id="GO:0016264">
    <property type="term" value="P:gap junction assembly"/>
    <property type="evidence" value="ECO:0007669"/>
    <property type="project" value="Ensembl"/>
</dbReference>
<dbReference type="GO" id="GO:0007507">
    <property type="term" value="P:heart development"/>
    <property type="evidence" value="ECO:0000318"/>
    <property type="project" value="GO_Central"/>
</dbReference>
<dbReference type="GO" id="GO:0003174">
    <property type="term" value="P:mitral valve development"/>
    <property type="evidence" value="ECO:0007669"/>
    <property type="project" value="Ensembl"/>
</dbReference>
<dbReference type="GO" id="GO:0003151">
    <property type="term" value="P:outflow tract morphogenesis"/>
    <property type="evidence" value="ECO:0007669"/>
    <property type="project" value="Ensembl"/>
</dbReference>
<dbReference type="GO" id="GO:0003193">
    <property type="term" value="P:pulmonary valve formation"/>
    <property type="evidence" value="ECO:0007669"/>
    <property type="project" value="Ensembl"/>
</dbReference>
<dbReference type="GO" id="GO:0098910">
    <property type="term" value="P:regulation of atrial cardiac muscle cell action potential"/>
    <property type="evidence" value="ECO:0007669"/>
    <property type="project" value="Ensembl"/>
</dbReference>
<dbReference type="GO" id="GO:0060371">
    <property type="term" value="P:regulation of atrial cardiac muscle cell membrane depolarization"/>
    <property type="evidence" value="ECO:0007669"/>
    <property type="project" value="Ensembl"/>
</dbReference>
<dbReference type="GO" id="GO:0098904">
    <property type="term" value="P:regulation of AV node cell action potential"/>
    <property type="evidence" value="ECO:0007669"/>
    <property type="project" value="Ensembl"/>
</dbReference>
<dbReference type="GO" id="GO:0098905">
    <property type="term" value="P:regulation of bundle of His cell action potential"/>
    <property type="evidence" value="ECO:0007669"/>
    <property type="project" value="Ensembl"/>
</dbReference>
<dbReference type="GO" id="GO:0086091">
    <property type="term" value="P:regulation of heart rate by cardiac conduction"/>
    <property type="evidence" value="ECO:0007669"/>
    <property type="project" value="Ensembl"/>
</dbReference>
<dbReference type="GO" id="GO:1900825">
    <property type="term" value="P:regulation of membrane depolarization during cardiac muscle cell action potential"/>
    <property type="evidence" value="ECO:0007669"/>
    <property type="project" value="Ensembl"/>
</dbReference>
<dbReference type="GO" id="GO:0098906">
    <property type="term" value="P:regulation of Purkinje myocyte action potential"/>
    <property type="evidence" value="ECO:0007669"/>
    <property type="project" value="Ensembl"/>
</dbReference>
<dbReference type="GO" id="GO:1900133">
    <property type="term" value="P:regulation of renin secretion into blood stream"/>
    <property type="evidence" value="ECO:0007669"/>
    <property type="project" value="Ensembl"/>
</dbReference>
<dbReference type="GO" id="GO:0060373">
    <property type="term" value="P:regulation of ventricular cardiac muscle cell membrane depolarization"/>
    <property type="evidence" value="ECO:0007669"/>
    <property type="project" value="Ensembl"/>
</dbReference>
<dbReference type="GO" id="GO:0060307">
    <property type="term" value="P:regulation of ventricular cardiac muscle cell membrane repolarization"/>
    <property type="evidence" value="ECO:0007669"/>
    <property type="project" value="Ensembl"/>
</dbReference>
<dbReference type="GO" id="GO:0003071">
    <property type="term" value="P:renal system process involved in regulation of systemic arterial blood pressure"/>
    <property type="evidence" value="ECO:0007669"/>
    <property type="project" value="Ensembl"/>
</dbReference>
<dbReference type="GO" id="GO:0086015">
    <property type="term" value="P:SA node cell action potential"/>
    <property type="evidence" value="ECO:0007669"/>
    <property type="project" value="Ensembl"/>
</dbReference>
<dbReference type="GO" id="GO:0003284">
    <property type="term" value="P:septum primum development"/>
    <property type="evidence" value="ECO:0007669"/>
    <property type="project" value="Ensembl"/>
</dbReference>
<dbReference type="GO" id="GO:0001501">
    <property type="term" value="P:skeletal system development"/>
    <property type="evidence" value="ECO:0007669"/>
    <property type="project" value="Ensembl"/>
</dbReference>
<dbReference type="GO" id="GO:0086005">
    <property type="term" value="P:ventricular cardiac muscle cell action potential"/>
    <property type="evidence" value="ECO:0007669"/>
    <property type="project" value="Ensembl"/>
</dbReference>
<dbReference type="GO" id="GO:0060412">
    <property type="term" value="P:ventricular septum morphogenesis"/>
    <property type="evidence" value="ECO:0007669"/>
    <property type="project" value="Ensembl"/>
</dbReference>
<dbReference type="FunFam" id="1.20.1440.80:FF:000001">
    <property type="entry name" value="Gap junction alpha-1"/>
    <property type="match status" value="1"/>
</dbReference>
<dbReference type="Gene3D" id="1.20.1440.80">
    <property type="entry name" value="Gap junction channel protein cysteine-rich domain"/>
    <property type="match status" value="1"/>
</dbReference>
<dbReference type="InterPro" id="IPR000500">
    <property type="entry name" value="Connexin"/>
</dbReference>
<dbReference type="InterPro" id="IPR002264">
    <property type="entry name" value="Connexin40"/>
</dbReference>
<dbReference type="InterPro" id="IPR034634">
    <property type="entry name" value="Connexin_C"/>
</dbReference>
<dbReference type="InterPro" id="IPR019570">
    <property type="entry name" value="Connexin_CCC"/>
</dbReference>
<dbReference type="InterPro" id="IPR017990">
    <property type="entry name" value="Connexin_CS"/>
</dbReference>
<dbReference type="InterPro" id="IPR013092">
    <property type="entry name" value="Connexin_N"/>
</dbReference>
<dbReference type="InterPro" id="IPR038359">
    <property type="entry name" value="Connexin_N_sf"/>
</dbReference>
<dbReference type="InterPro" id="IPR031862">
    <property type="entry name" value="Cx40_C"/>
</dbReference>
<dbReference type="PANTHER" id="PTHR11984">
    <property type="entry name" value="CONNEXIN"/>
    <property type="match status" value="1"/>
</dbReference>
<dbReference type="PANTHER" id="PTHR11984:SF13">
    <property type="entry name" value="GAP JUNCTION ALPHA-5 PROTEIN"/>
    <property type="match status" value="1"/>
</dbReference>
<dbReference type="Pfam" id="PF00029">
    <property type="entry name" value="Connexin"/>
    <property type="match status" value="1"/>
</dbReference>
<dbReference type="Pfam" id="PF16791">
    <property type="entry name" value="Connexin40_C"/>
    <property type="match status" value="1"/>
</dbReference>
<dbReference type="PRINTS" id="PR00206">
    <property type="entry name" value="CONNEXIN"/>
</dbReference>
<dbReference type="PRINTS" id="PR01135">
    <property type="entry name" value="CONNEXINA5"/>
</dbReference>
<dbReference type="SMART" id="SM00037">
    <property type="entry name" value="CNX"/>
    <property type="match status" value="1"/>
</dbReference>
<dbReference type="SMART" id="SM01089">
    <property type="entry name" value="Connexin_CCC"/>
    <property type="match status" value="1"/>
</dbReference>
<dbReference type="SUPFAM" id="SSF118220">
    <property type="entry name" value="Connexin43"/>
    <property type="match status" value="1"/>
</dbReference>
<dbReference type="PROSITE" id="PS00407">
    <property type="entry name" value="CONNEXINS_1"/>
    <property type="match status" value="1"/>
</dbReference>
<dbReference type="PROSITE" id="PS00408">
    <property type="entry name" value="CONNEXINS_2"/>
    <property type="match status" value="1"/>
</dbReference>
<proteinExistence type="evidence at transcript level"/>
<keyword id="KW-0965">Cell junction</keyword>
<keyword id="KW-1003">Cell membrane</keyword>
<keyword id="KW-0303">Gap junction</keyword>
<keyword id="KW-0472">Membrane</keyword>
<keyword id="KW-0597">Phosphoprotein</keyword>
<keyword id="KW-1185">Reference proteome</keyword>
<keyword id="KW-0812">Transmembrane</keyword>
<keyword id="KW-1133">Transmembrane helix</keyword>
<protein>
    <recommendedName>
        <fullName>Gap junction alpha-5 protein</fullName>
    </recommendedName>
    <alternativeName>
        <fullName>Connexin-40</fullName>
        <shortName>Cx40</shortName>
    </alternativeName>
</protein>
<evidence type="ECO:0000250" key="1">
    <source>
        <dbReference type="UniProtKB" id="P28234"/>
    </source>
</evidence>
<evidence type="ECO:0000255" key="2"/>
<evidence type="ECO:0000256" key="3">
    <source>
        <dbReference type="SAM" id="MobiDB-lite"/>
    </source>
</evidence>
<evidence type="ECO:0000305" key="4"/>
<gene>
    <name type="primary">GJA5</name>
</gene>
<comment type="function">
    <text>One gap junction consists of a cluster of closely packed pairs of transmembrane channels, the connexons, through which materials of low MW diffuse from one cell to a neighboring cell.</text>
</comment>
<comment type="subunit">
    <text>A connexon is composed of a hexamer of connexins.</text>
</comment>
<comment type="subcellular location">
    <subcellularLocation>
        <location>Cell membrane</location>
        <topology>Multi-pass membrane protein</topology>
    </subcellularLocation>
    <subcellularLocation>
        <location>Cell junction</location>
        <location>Gap junction</location>
    </subcellularLocation>
</comment>
<comment type="similarity">
    <text evidence="4">Belongs to the connexin family. Alpha-type (group II) subfamily.</text>
</comment>
<feature type="chain" id="PRO_0000057818" description="Gap junction alpha-5 protein">
    <location>
        <begin position="1"/>
        <end position="358"/>
    </location>
</feature>
<feature type="topological domain" description="Cytoplasmic" evidence="2">
    <location>
        <begin position="1"/>
        <end position="19"/>
    </location>
</feature>
<feature type="transmembrane region" description="Helical" evidence="2">
    <location>
        <begin position="20"/>
        <end position="40"/>
    </location>
</feature>
<feature type="topological domain" description="Extracellular" evidence="2">
    <location>
        <begin position="41"/>
        <end position="76"/>
    </location>
</feature>
<feature type="transmembrane region" description="Helical" evidence="2">
    <location>
        <begin position="77"/>
        <end position="97"/>
    </location>
</feature>
<feature type="topological domain" description="Cytoplasmic" evidence="2">
    <location>
        <begin position="98"/>
        <end position="164"/>
    </location>
</feature>
<feature type="transmembrane region" description="Helical" evidence="2">
    <location>
        <begin position="165"/>
        <end position="185"/>
    </location>
</feature>
<feature type="topological domain" description="Extracellular" evidence="2">
    <location>
        <begin position="186"/>
        <end position="205"/>
    </location>
</feature>
<feature type="transmembrane region" description="Helical" evidence="2">
    <location>
        <begin position="206"/>
        <end position="226"/>
    </location>
</feature>
<feature type="topological domain" description="Cytoplasmic" evidence="2">
    <location>
        <begin position="227"/>
        <end position="358"/>
    </location>
</feature>
<feature type="region of interest" description="Disordered" evidence="3">
    <location>
        <begin position="318"/>
        <end position="358"/>
    </location>
</feature>
<feature type="modified residue" description="Phosphoserine" evidence="1">
    <location>
        <position position="353"/>
    </location>
</feature>
<feature type="modified residue" description="Phosphoserine" evidence="1">
    <location>
        <position position="357"/>
    </location>
</feature>
<feature type="sequence conflict" description="In Ref. 1; AAA30838." evidence="4" ref="1">
    <original>KLRE</original>
    <variation>NVRK</variation>
    <location>
        <begin position="107"/>
        <end position="110"/>
    </location>
</feature>
<feature type="sequence conflict" description="In Ref. 1; AAA30838." evidence="4" ref="1">
    <location>
        <position position="118"/>
    </location>
</feature>
<feature type="sequence conflict" description="In Ref. 1; AAA30838." evidence="4" ref="1">
    <original>E</original>
    <variation>K</variation>
    <location>
        <position position="272"/>
    </location>
</feature>
<feature type="sequence conflict" description="In Ref. 1; AAA30838." evidence="4" ref="1">
    <original>H</original>
    <variation>N</variation>
    <location>
        <position position="314"/>
    </location>
</feature>
<feature type="sequence conflict" description="In Ref. 2; AAT10275." evidence="4" ref="2">
    <original>G</original>
    <variation>S</variation>
    <location>
        <position position="330"/>
    </location>
</feature>